<name>RR7_HUPLU</name>
<evidence type="ECO:0000250" key="1"/>
<evidence type="ECO:0000305" key="2"/>
<organism>
    <name type="scientific">Huperzia lucidula</name>
    <name type="common">Shining clubmoss</name>
    <name type="synonym">Lycopodium lucidulum</name>
    <dbReference type="NCBI Taxonomy" id="37429"/>
    <lineage>
        <taxon>Eukaryota</taxon>
        <taxon>Viridiplantae</taxon>
        <taxon>Streptophyta</taxon>
        <taxon>Embryophyta</taxon>
        <taxon>Tracheophyta</taxon>
        <taxon>Lycopodiopsida</taxon>
        <taxon>Lycopodiales</taxon>
        <taxon>Lycopodiaceae</taxon>
        <taxon>Huperzioideae</taxon>
        <taxon>Huperzia</taxon>
    </lineage>
</organism>
<gene>
    <name type="primary">rps7</name>
</gene>
<protein>
    <recommendedName>
        <fullName evidence="2">Small ribosomal subunit protein uS7c</fullName>
    </recommendedName>
    <alternativeName>
        <fullName>30S ribosomal protein S7, chloroplastic</fullName>
    </alternativeName>
</protein>
<sequence>MSRRDDTKADPIYRNRLVNMLVNRILKHGKKSLAYRILYNAMMNIRRETKYNPLFILRQAIRQVTPNVTIETRRVGGSTYRVPTEIESTQGKALAIRWLLEASRKRPGRNIASKSSSELMDAAENSGNAIRKREETHRMAEANRAFAHLR</sequence>
<geneLocation type="chloroplast"/>
<proteinExistence type="inferred from homology"/>
<comment type="function">
    <text evidence="1">One of the primary rRNA binding proteins, it binds directly to 16S rRNA where it nucleates assembly of the head domain of the 30S subunit.</text>
</comment>
<comment type="subunit">
    <text>Part of the 30S ribosomal subunit.</text>
</comment>
<comment type="subcellular location">
    <subcellularLocation>
        <location>Plastid</location>
        <location>Chloroplast</location>
    </subcellularLocation>
</comment>
<comment type="similarity">
    <text evidence="2">Belongs to the universal ribosomal protein uS7 family.</text>
</comment>
<dbReference type="EMBL" id="AY660566">
    <property type="protein sequence ID" value="AAT80752.1"/>
    <property type="molecule type" value="Genomic_DNA"/>
</dbReference>
<dbReference type="RefSeq" id="YP_209556.1">
    <property type="nucleotide sequence ID" value="NC_006861.1"/>
</dbReference>
<dbReference type="SMR" id="Q5SCY6"/>
<dbReference type="GeneID" id="3283773"/>
<dbReference type="GO" id="GO:0009507">
    <property type="term" value="C:chloroplast"/>
    <property type="evidence" value="ECO:0007669"/>
    <property type="project" value="UniProtKB-SubCell"/>
</dbReference>
<dbReference type="GO" id="GO:0015935">
    <property type="term" value="C:small ribosomal subunit"/>
    <property type="evidence" value="ECO:0007669"/>
    <property type="project" value="InterPro"/>
</dbReference>
<dbReference type="GO" id="GO:0019843">
    <property type="term" value="F:rRNA binding"/>
    <property type="evidence" value="ECO:0007669"/>
    <property type="project" value="UniProtKB-UniRule"/>
</dbReference>
<dbReference type="GO" id="GO:0003735">
    <property type="term" value="F:structural constituent of ribosome"/>
    <property type="evidence" value="ECO:0007669"/>
    <property type="project" value="InterPro"/>
</dbReference>
<dbReference type="GO" id="GO:0006412">
    <property type="term" value="P:translation"/>
    <property type="evidence" value="ECO:0007669"/>
    <property type="project" value="UniProtKB-UniRule"/>
</dbReference>
<dbReference type="CDD" id="cd14871">
    <property type="entry name" value="uS7_Chloroplast"/>
    <property type="match status" value="1"/>
</dbReference>
<dbReference type="FunFam" id="1.10.455.10:FF:000001">
    <property type="entry name" value="30S ribosomal protein S7"/>
    <property type="match status" value="1"/>
</dbReference>
<dbReference type="Gene3D" id="1.10.455.10">
    <property type="entry name" value="Ribosomal protein S7 domain"/>
    <property type="match status" value="1"/>
</dbReference>
<dbReference type="HAMAP" id="MF_00480_B">
    <property type="entry name" value="Ribosomal_uS7_B"/>
    <property type="match status" value="1"/>
</dbReference>
<dbReference type="InterPro" id="IPR000235">
    <property type="entry name" value="Ribosomal_uS7"/>
</dbReference>
<dbReference type="InterPro" id="IPR005717">
    <property type="entry name" value="Ribosomal_uS7_bac/org-type"/>
</dbReference>
<dbReference type="InterPro" id="IPR020606">
    <property type="entry name" value="Ribosomal_uS7_CS"/>
</dbReference>
<dbReference type="InterPro" id="IPR023798">
    <property type="entry name" value="Ribosomal_uS7_dom"/>
</dbReference>
<dbReference type="InterPro" id="IPR036823">
    <property type="entry name" value="Ribosomal_uS7_dom_sf"/>
</dbReference>
<dbReference type="NCBIfam" id="TIGR01029">
    <property type="entry name" value="rpsG_bact"/>
    <property type="match status" value="1"/>
</dbReference>
<dbReference type="PANTHER" id="PTHR11205">
    <property type="entry name" value="RIBOSOMAL PROTEIN S7"/>
    <property type="match status" value="1"/>
</dbReference>
<dbReference type="Pfam" id="PF00177">
    <property type="entry name" value="Ribosomal_S7"/>
    <property type="match status" value="1"/>
</dbReference>
<dbReference type="PIRSF" id="PIRSF002122">
    <property type="entry name" value="RPS7p_RPS7a_RPS5e_RPS7o"/>
    <property type="match status" value="1"/>
</dbReference>
<dbReference type="SUPFAM" id="SSF47973">
    <property type="entry name" value="Ribosomal protein S7"/>
    <property type="match status" value="1"/>
</dbReference>
<dbReference type="PROSITE" id="PS00052">
    <property type="entry name" value="RIBOSOMAL_S7"/>
    <property type="match status" value="1"/>
</dbReference>
<keyword id="KW-0150">Chloroplast</keyword>
<keyword id="KW-0934">Plastid</keyword>
<keyword id="KW-0687">Ribonucleoprotein</keyword>
<keyword id="KW-0689">Ribosomal protein</keyword>
<keyword id="KW-0694">RNA-binding</keyword>
<keyword id="KW-0699">rRNA-binding</keyword>
<reference key="1">
    <citation type="journal article" date="2005" name="Gene">
        <title>The first complete chloroplast genome sequence of a lycophyte, Huperzia lucidula (Lycopodiaceae).</title>
        <authorList>
            <person name="Wolf P.G."/>
            <person name="Karol K.G."/>
            <person name="Mandoli D.F."/>
            <person name="Kuehl J.V."/>
            <person name="Arumuganathan K."/>
            <person name="Ellis M.W."/>
            <person name="Mishler B.D."/>
            <person name="Kelch D.G."/>
            <person name="Olmstead R.G."/>
            <person name="Boore J.L."/>
        </authorList>
    </citation>
    <scope>NUCLEOTIDE SEQUENCE [LARGE SCALE GENOMIC DNA]</scope>
</reference>
<feature type="chain" id="PRO_0000124461" description="Small ribosomal subunit protein uS7c">
    <location>
        <begin position="1"/>
        <end position="150"/>
    </location>
</feature>
<accession>Q5SCY6</accession>